<gene>
    <name type="primary">rpsB</name>
    <name type="ordered locus">BU231</name>
</gene>
<name>RS2_BUCAI</name>
<feature type="chain" id="PRO_0000134142" description="Small ribosomal subunit protein uS2">
    <location>
        <begin position="1"/>
        <end position="244"/>
    </location>
</feature>
<organism>
    <name type="scientific">Buchnera aphidicola subsp. Acyrthosiphon pisum (strain APS)</name>
    <name type="common">Acyrthosiphon pisum symbiotic bacterium</name>
    <dbReference type="NCBI Taxonomy" id="107806"/>
    <lineage>
        <taxon>Bacteria</taxon>
        <taxon>Pseudomonadati</taxon>
        <taxon>Pseudomonadota</taxon>
        <taxon>Gammaproteobacteria</taxon>
        <taxon>Enterobacterales</taxon>
        <taxon>Erwiniaceae</taxon>
        <taxon>Buchnera</taxon>
    </lineage>
</organism>
<comment type="similarity">
    <text evidence="1">Belongs to the universal ribosomal protein uS2 family.</text>
</comment>
<evidence type="ECO:0000305" key="1"/>
<proteinExistence type="inferred from homology"/>
<protein>
    <recommendedName>
        <fullName evidence="1">Small ribosomal subunit protein uS2</fullName>
    </recommendedName>
    <alternativeName>
        <fullName>30S ribosomal protein S2</fullName>
    </alternativeName>
</protein>
<dbReference type="EMBL" id="BA000003">
    <property type="protein sequence ID" value="BAB12946.1"/>
    <property type="molecule type" value="Genomic_DNA"/>
</dbReference>
<dbReference type="RefSeq" id="NP_240060.1">
    <property type="nucleotide sequence ID" value="NC_002528.1"/>
</dbReference>
<dbReference type="RefSeq" id="WP_009874187.1">
    <property type="nucleotide sequence ID" value="NZ_AP036055.1"/>
</dbReference>
<dbReference type="SMR" id="P57325"/>
<dbReference type="STRING" id="563178.BUAP5A_226"/>
<dbReference type="EnsemblBacteria" id="BAB12946">
    <property type="protein sequence ID" value="BAB12946"/>
    <property type="gene ID" value="BAB12946"/>
</dbReference>
<dbReference type="KEGG" id="buc:BU231"/>
<dbReference type="PATRIC" id="fig|107806.10.peg.244"/>
<dbReference type="eggNOG" id="COG0052">
    <property type="taxonomic scope" value="Bacteria"/>
</dbReference>
<dbReference type="HOGENOM" id="CLU_040318_1_0_6"/>
<dbReference type="Proteomes" id="UP000001806">
    <property type="component" value="Chromosome"/>
</dbReference>
<dbReference type="GO" id="GO:0022627">
    <property type="term" value="C:cytosolic small ribosomal subunit"/>
    <property type="evidence" value="ECO:0007669"/>
    <property type="project" value="TreeGrafter"/>
</dbReference>
<dbReference type="GO" id="GO:0003735">
    <property type="term" value="F:structural constituent of ribosome"/>
    <property type="evidence" value="ECO:0007669"/>
    <property type="project" value="InterPro"/>
</dbReference>
<dbReference type="GO" id="GO:0006412">
    <property type="term" value="P:translation"/>
    <property type="evidence" value="ECO:0007669"/>
    <property type="project" value="UniProtKB-UniRule"/>
</dbReference>
<dbReference type="CDD" id="cd01425">
    <property type="entry name" value="RPS2"/>
    <property type="match status" value="1"/>
</dbReference>
<dbReference type="FunFam" id="1.10.287.610:FF:000001">
    <property type="entry name" value="30S ribosomal protein S2"/>
    <property type="match status" value="1"/>
</dbReference>
<dbReference type="Gene3D" id="3.40.50.10490">
    <property type="entry name" value="Glucose-6-phosphate isomerase like protein, domain 1"/>
    <property type="match status" value="1"/>
</dbReference>
<dbReference type="Gene3D" id="1.10.287.610">
    <property type="entry name" value="Helix hairpin bin"/>
    <property type="match status" value="1"/>
</dbReference>
<dbReference type="HAMAP" id="MF_00291_B">
    <property type="entry name" value="Ribosomal_uS2_B"/>
    <property type="match status" value="1"/>
</dbReference>
<dbReference type="InterPro" id="IPR001865">
    <property type="entry name" value="Ribosomal_uS2"/>
</dbReference>
<dbReference type="InterPro" id="IPR005706">
    <property type="entry name" value="Ribosomal_uS2_bac/mit/plastid"/>
</dbReference>
<dbReference type="InterPro" id="IPR018130">
    <property type="entry name" value="Ribosomal_uS2_CS"/>
</dbReference>
<dbReference type="InterPro" id="IPR023591">
    <property type="entry name" value="Ribosomal_uS2_flav_dom_sf"/>
</dbReference>
<dbReference type="NCBIfam" id="TIGR01011">
    <property type="entry name" value="rpsB_bact"/>
    <property type="match status" value="1"/>
</dbReference>
<dbReference type="PANTHER" id="PTHR12534">
    <property type="entry name" value="30S RIBOSOMAL PROTEIN S2 PROKARYOTIC AND ORGANELLAR"/>
    <property type="match status" value="1"/>
</dbReference>
<dbReference type="PANTHER" id="PTHR12534:SF0">
    <property type="entry name" value="SMALL RIBOSOMAL SUBUNIT PROTEIN US2M"/>
    <property type="match status" value="1"/>
</dbReference>
<dbReference type="Pfam" id="PF00318">
    <property type="entry name" value="Ribosomal_S2"/>
    <property type="match status" value="1"/>
</dbReference>
<dbReference type="PRINTS" id="PR00395">
    <property type="entry name" value="RIBOSOMALS2"/>
</dbReference>
<dbReference type="SUPFAM" id="SSF52313">
    <property type="entry name" value="Ribosomal protein S2"/>
    <property type="match status" value="1"/>
</dbReference>
<dbReference type="PROSITE" id="PS00962">
    <property type="entry name" value="RIBOSOMAL_S2_1"/>
    <property type="match status" value="1"/>
</dbReference>
<dbReference type="PROSITE" id="PS00963">
    <property type="entry name" value="RIBOSOMAL_S2_2"/>
    <property type="match status" value="1"/>
</dbReference>
<sequence>MEIVSMREMLKAGVHFGHQTRYWNPKMKPFIFGIRNRVHIINLEKTLPMFHFALSELKKIALKKGRILFVGTKKAASKGIKEVAINCEQFYVNHRWLGGMLTNWKTVRQSIKRLKDLEIESKDGTFSKLTKKEALIRSRELFKLENSLGGIKNMGGLPDCLFVIDAAHENIAITEANNLGIPVFSIVDTNSNPDGVDYIIPGNDDAIRSVNLYLKSIMLTISKINNQNSLDKVFIDTKNSTNIE</sequence>
<keyword id="KW-1185">Reference proteome</keyword>
<keyword id="KW-0687">Ribonucleoprotein</keyword>
<keyword id="KW-0689">Ribosomal protein</keyword>
<reference key="1">
    <citation type="journal article" date="2000" name="Nature">
        <title>Genome sequence of the endocellular bacterial symbiont of aphids Buchnera sp. APS.</title>
        <authorList>
            <person name="Shigenobu S."/>
            <person name="Watanabe H."/>
            <person name="Hattori M."/>
            <person name="Sakaki Y."/>
            <person name="Ishikawa H."/>
        </authorList>
    </citation>
    <scope>NUCLEOTIDE SEQUENCE [LARGE SCALE GENOMIC DNA]</scope>
    <source>
        <strain>APS</strain>
    </source>
</reference>
<accession>P57325</accession>